<reference key="1">
    <citation type="journal article" date="2008" name="J. Bacteriol.">
        <title>The complete genome sequence of Actinobacillus pleuropneumoniae L20 (serotype 5b).</title>
        <authorList>
            <person name="Foote S.J."/>
            <person name="Bosse J.T."/>
            <person name="Bouevitch A.B."/>
            <person name="Langford P.R."/>
            <person name="Young N.M."/>
            <person name="Nash J.H.E."/>
        </authorList>
    </citation>
    <scope>NUCLEOTIDE SEQUENCE [LARGE SCALE GENOMIC DNA]</scope>
    <source>
        <strain>L20</strain>
    </source>
</reference>
<sequence length="240" mass="27419">MIENWHRGFVLHRREYSETSLLVDFFTEEHGRVTLLAKGARRPRSPLKAVLQPFTPLLLRWSGKGDLKTLTKAEPASLTLPMQTLALYSGFYVNEVLARVLENQTAYPELFQHYLQCMTRLATQPKQIEPILRTFEFQMLKALGYGVNFSICAATGDPVSPSMTYQFRENQGFIASLLQNNYTFLGKDLLAFEQLNFSDKATLQAAKRFTRMALKPYLGSQPLKSRELFQSILPNKLKSS</sequence>
<dbReference type="EMBL" id="CP000569">
    <property type="protein sequence ID" value="ABN73647.1"/>
    <property type="molecule type" value="Genomic_DNA"/>
</dbReference>
<dbReference type="RefSeq" id="WP_009875473.1">
    <property type="nucleotide sequence ID" value="NC_009053.1"/>
</dbReference>
<dbReference type="SMR" id="A3MZR1"/>
<dbReference type="STRING" id="416269.APL_0545"/>
<dbReference type="EnsemblBacteria" id="ABN73647">
    <property type="protein sequence ID" value="ABN73647"/>
    <property type="gene ID" value="APL_0545"/>
</dbReference>
<dbReference type="KEGG" id="apl:APL_0545"/>
<dbReference type="PATRIC" id="fig|416269.6.peg.576"/>
<dbReference type="eggNOG" id="COG1381">
    <property type="taxonomic scope" value="Bacteria"/>
</dbReference>
<dbReference type="HOGENOM" id="CLU_066645_1_0_6"/>
<dbReference type="Proteomes" id="UP000001432">
    <property type="component" value="Chromosome"/>
</dbReference>
<dbReference type="GO" id="GO:0043590">
    <property type="term" value="C:bacterial nucleoid"/>
    <property type="evidence" value="ECO:0007669"/>
    <property type="project" value="TreeGrafter"/>
</dbReference>
<dbReference type="GO" id="GO:0006310">
    <property type="term" value="P:DNA recombination"/>
    <property type="evidence" value="ECO:0007669"/>
    <property type="project" value="UniProtKB-UniRule"/>
</dbReference>
<dbReference type="GO" id="GO:0006302">
    <property type="term" value="P:double-strand break repair"/>
    <property type="evidence" value="ECO:0007669"/>
    <property type="project" value="TreeGrafter"/>
</dbReference>
<dbReference type="Gene3D" id="2.40.50.140">
    <property type="entry name" value="Nucleic acid-binding proteins"/>
    <property type="match status" value="1"/>
</dbReference>
<dbReference type="Gene3D" id="1.20.1440.120">
    <property type="entry name" value="Recombination protein O, C-terminal domain"/>
    <property type="match status" value="1"/>
</dbReference>
<dbReference type="HAMAP" id="MF_00201">
    <property type="entry name" value="RecO"/>
    <property type="match status" value="1"/>
</dbReference>
<dbReference type="InterPro" id="IPR037278">
    <property type="entry name" value="ARFGAP/RecO"/>
</dbReference>
<dbReference type="InterPro" id="IPR022572">
    <property type="entry name" value="DNA_rep/recomb_RecO_N"/>
</dbReference>
<dbReference type="InterPro" id="IPR012340">
    <property type="entry name" value="NA-bd_OB-fold"/>
</dbReference>
<dbReference type="InterPro" id="IPR003717">
    <property type="entry name" value="RecO"/>
</dbReference>
<dbReference type="InterPro" id="IPR042242">
    <property type="entry name" value="RecO_C"/>
</dbReference>
<dbReference type="NCBIfam" id="TIGR00613">
    <property type="entry name" value="reco"/>
    <property type="match status" value="1"/>
</dbReference>
<dbReference type="PANTHER" id="PTHR33991">
    <property type="entry name" value="DNA REPAIR PROTEIN RECO"/>
    <property type="match status" value="1"/>
</dbReference>
<dbReference type="PANTHER" id="PTHR33991:SF1">
    <property type="entry name" value="DNA REPAIR PROTEIN RECO"/>
    <property type="match status" value="1"/>
</dbReference>
<dbReference type="Pfam" id="PF02565">
    <property type="entry name" value="RecO_C"/>
    <property type="match status" value="1"/>
</dbReference>
<dbReference type="Pfam" id="PF11967">
    <property type="entry name" value="RecO_N"/>
    <property type="match status" value="1"/>
</dbReference>
<dbReference type="SUPFAM" id="SSF57863">
    <property type="entry name" value="ArfGap/RecO-like zinc finger"/>
    <property type="match status" value="1"/>
</dbReference>
<dbReference type="SUPFAM" id="SSF50249">
    <property type="entry name" value="Nucleic acid-binding proteins"/>
    <property type="match status" value="1"/>
</dbReference>
<feature type="chain" id="PRO_1000012118" description="DNA repair protein RecO">
    <location>
        <begin position="1"/>
        <end position="240"/>
    </location>
</feature>
<gene>
    <name evidence="1" type="primary">recO</name>
    <name type="ordered locus">APL_0545</name>
</gene>
<accession>A3MZR1</accession>
<keyword id="KW-0227">DNA damage</keyword>
<keyword id="KW-0233">DNA recombination</keyword>
<keyword id="KW-0234">DNA repair</keyword>
<keyword id="KW-1185">Reference proteome</keyword>
<proteinExistence type="inferred from homology"/>
<comment type="function">
    <text evidence="1">Involved in DNA repair and RecF pathway recombination.</text>
</comment>
<comment type="similarity">
    <text evidence="1">Belongs to the RecO family.</text>
</comment>
<protein>
    <recommendedName>
        <fullName evidence="1">DNA repair protein RecO</fullName>
    </recommendedName>
    <alternativeName>
        <fullName evidence="1">Recombination protein O</fullName>
    </alternativeName>
</protein>
<evidence type="ECO:0000255" key="1">
    <source>
        <dbReference type="HAMAP-Rule" id="MF_00201"/>
    </source>
</evidence>
<name>RECO_ACTP2</name>
<organism>
    <name type="scientific">Actinobacillus pleuropneumoniae serotype 5b (strain L20)</name>
    <dbReference type="NCBI Taxonomy" id="416269"/>
    <lineage>
        <taxon>Bacteria</taxon>
        <taxon>Pseudomonadati</taxon>
        <taxon>Pseudomonadota</taxon>
        <taxon>Gammaproteobacteria</taxon>
        <taxon>Pasteurellales</taxon>
        <taxon>Pasteurellaceae</taxon>
        <taxon>Actinobacillus</taxon>
    </lineage>
</organism>